<gene>
    <name type="primary">AIM36</name>
    <name type="synonym">FMP39</name>
    <name type="ordered locus">CAALFM_C202280WA</name>
    <name type="ORF">CaO19.1546</name>
    <name type="ORF">CaO19.9120</name>
</gene>
<reference key="1">
    <citation type="journal article" date="2004" name="Proc. Natl. Acad. Sci. U.S.A.">
        <title>The diploid genome sequence of Candida albicans.</title>
        <authorList>
            <person name="Jones T."/>
            <person name="Federspiel N.A."/>
            <person name="Chibana H."/>
            <person name="Dungan J."/>
            <person name="Kalman S."/>
            <person name="Magee B.B."/>
            <person name="Newport G."/>
            <person name="Thorstenson Y.R."/>
            <person name="Agabian N."/>
            <person name="Magee P.T."/>
            <person name="Davis R.W."/>
            <person name="Scherer S."/>
        </authorList>
    </citation>
    <scope>NUCLEOTIDE SEQUENCE [LARGE SCALE GENOMIC DNA]</scope>
    <source>
        <strain>SC5314 / ATCC MYA-2876</strain>
    </source>
</reference>
<reference key="2">
    <citation type="journal article" date="2007" name="Genome Biol.">
        <title>Assembly of the Candida albicans genome into sixteen supercontigs aligned on the eight chromosomes.</title>
        <authorList>
            <person name="van het Hoog M."/>
            <person name="Rast T.J."/>
            <person name="Martchenko M."/>
            <person name="Grindle S."/>
            <person name="Dignard D."/>
            <person name="Hogues H."/>
            <person name="Cuomo C."/>
            <person name="Berriman M."/>
            <person name="Scherer S."/>
            <person name="Magee B.B."/>
            <person name="Whiteway M."/>
            <person name="Chibana H."/>
            <person name="Nantel A."/>
            <person name="Magee P.T."/>
        </authorList>
    </citation>
    <scope>GENOME REANNOTATION</scope>
    <source>
        <strain>SC5314 / ATCC MYA-2876</strain>
    </source>
</reference>
<reference key="3">
    <citation type="journal article" date="2013" name="Genome Biol.">
        <title>Assembly of a phased diploid Candida albicans genome facilitates allele-specific measurements and provides a simple model for repeat and indel structure.</title>
        <authorList>
            <person name="Muzzey D."/>
            <person name="Schwartz K."/>
            <person name="Weissman J.S."/>
            <person name="Sherlock G."/>
        </authorList>
    </citation>
    <scope>NUCLEOTIDE SEQUENCE [LARGE SCALE GENOMIC DNA]</scope>
    <scope>GENOME REANNOTATION</scope>
    <source>
        <strain>SC5314 / ATCC MYA-2876</strain>
    </source>
</reference>
<feature type="transit peptide" description="Mitochondrion" evidence="2">
    <location>
        <begin position="1"/>
        <end position="26"/>
    </location>
</feature>
<feature type="chain" id="PRO_0000399719" description="Altered inheritance of mitochondria protein 36, mitochondrial">
    <location>
        <begin position="27"/>
        <end position="292"/>
    </location>
</feature>
<feature type="transmembrane region" description="Helical" evidence="2">
    <location>
        <begin position="56"/>
        <end position="75"/>
    </location>
</feature>
<keyword id="KW-0472">Membrane</keyword>
<keyword id="KW-0496">Mitochondrion</keyword>
<keyword id="KW-1185">Reference proteome</keyword>
<keyword id="KW-0809">Transit peptide</keyword>
<keyword id="KW-0812">Transmembrane</keyword>
<keyword id="KW-1133">Transmembrane helix</keyword>
<accession>Q5ALN1</accession>
<accession>A0A1D8PGJ0</accession>
<sequence>MFARLVPRLQPQLLSKRVLTARYPMLTTTPIYHQTPMQIIKRNYVIVHRERKKEPVIRYLFYMLVASWVAIYFVANRVDKKKPPQQSFTEREFQSYEEETGLKRRNKLISHTMNSKYKFYVIPYVHDEEELKKVANLLQHKDENATVKIIDPAQLIEEQKKDEGMKYHYLLEDLDEQGRPYPPGLITAVIKQEIYKILNTREGTFDTNFIIKNYPQTTNEAIKFENDISDIQKCLILHYDMLNELPKNKTDEEQRAIKNVDGYFDSVGKSKTLVEKFDPMDKEFEEIMLEDI</sequence>
<evidence type="ECO:0000250" key="1"/>
<evidence type="ECO:0000255" key="2"/>
<evidence type="ECO:0000305" key="3"/>
<protein>
    <recommendedName>
        <fullName>Altered inheritance of mitochondria protein 36, mitochondrial</fullName>
    </recommendedName>
    <alternativeName>
        <fullName>Found in mitochondria protein 39</fullName>
    </alternativeName>
</protein>
<name>AIM36_CANAL</name>
<organism>
    <name type="scientific">Candida albicans (strain SC5314 / ATCC MYA-2876)</name>
    <name type="common">Yeast</name>
    <dbReference type="NCBI Taxonomy" id="237561"/>
    <lineage>
        <taxon>Eukaryota</taxon>
        <taxon>Fungi</taxon>
        <taxon>Dikarya</taxon>
        <taxon>Ascomycota</taxon>
        <taxon>Saccharomycotina</taxon>
        <taxon>Pichiomycetes</taxon>
        <taxon>Debaryomycetaceae</taxon>
        <taxon>Candida/Lodderomyces clade</taxon>
        <taxon>Candida</taxon>
    </lineage>
</organism>
<proteinExistence type="inferred from homology"/>
<dbReference type="EMBL" id="CP017624">
    <property type="protein sequence ID" value="AOW27268.1"/>
    <property type="molecule type" value="Genomic_DNA"/>
</dbReference>
<dbReference type="RefSeq" id="XP_722589.1">
    <property type="nucleotide sequence ID" value="XM_717496.1"/>
</dbReference>
<dbReference type="SMR" id="Q5ALN1"/>
<dbReference type="FunCoup" id="Q5ALN1">
    <property type="interactions" value="20"/>
</dbReference>
<dbReference type="STRING" id="237561.Q5ALN1"/>
<dbReference type="EnsemblFungi" id="C2_02280W_A-T">
    <property type="protein sequence ID" value="C2_02280W_A-T-p1"/>
    <property type="gene ID" value="C2_02280W_A"/>
</dbReference>
<dbReference type="GeneID" id="3635806"/>
<dbReference type="KEGG" id="cal:CAALFM_C202280WA"/>
<dbReference type="CGD" id="CAL0000191753">
    <property type="gene designation" value="orf19.9120"/>
</dbReference>
<dbReference type="VEuPathDB" id="FungiDB:C2_02280W_A"/>
<dbReference type="eggNOG" id="ENOG502SAUM">
    <property type="taxonomic scope" value="Eukaryota"/>
</dbReference>
<dbReference type="HOGENOM" id="CLU_997550_0_0_1"/>
<dbReference type="InParanoid" id="Q5ALN1"/>
<dbReference type="OrthoDB" id="4081130at2759"/>
<dbReference type="PRO" id="PR:Q5ALN1"/>
<dbReference type="Proteomes" id="UP000000559">
    <property type="component" value="Chromosome 2"/>
</dbReference>
<dbReference type="GO" id="GO:0031966">
    <property type="term" value="C:mitochondrial membrane"/>
    <property type="evidence" value="ECO:0007669"/>
    <property type="project" value="UniProtKB-SubCell"/>
</dbReference>
<dbReference type="GO" id="GO:0005886">
    <property type="term" value="C:plasma membrane"/>
    <property type="evidence" value="ECO:0000314"/>
    <property type="project" value="CGD"/>
</dbReference>
<dbReference type="Gene3D" id="3.40.50.300">
    <property type="entry name" value="P-loop containing nucleotide triphosphate hydrolases"/>
    <property type="match status" value="1"/>
</dbReference>
<dbReference type="InterPro" id="IPR027417">
    <property type="entry name" value="P-loop_NTPase"/>
</dbReference>
<comment type="subcellular location">
    <subcellularLocation>
        <location evidence="1">Mitochondrion membrane</location>
        <topology evidence="1">Single-pass membrane protein</topology>
    </subcellularLocation>
</comment>
<comment type="similarity">
    <text evidence="3">Belongs to the AIM36 family.</text>
</comment>